<accession>B2S5T0</accession>
<protein>
    <recommendedName>
        <fullName evidence="1">GTP cyclohydrolase 1</fullName>
        <ecNumber evidence="1">3.5.4.16</ecNumber>
    </recommendedName>
    <alternativeName>
        <fullName evidence="1">GTP cyclohydrolase I</fullName>
        <shortName evidence="1">GTP-CH-I</shortName>
    </alternativeName>
</protein>
<reference key="1">
    <citation type="journal article" date="2008" name="PLoS ONE">
        <title>Genome sequence of Brucella abortus vaccine strain S19 compared to virulent strains yields candidate virulence genes.</title>
        <authorList>
            <person name="Crasta O.R."/>
            <person name="Folkerts O."/>
            <person name="Fei Z."/>
            <person name="Mane S.P."/>
            <person name="Evans C."/>
            <person name="Martino-Catt S."/>
            <person name="Bricker B."/>
            <person name="Yu G."/>
            <person name="Du L."/>
            <person name="Sobral B.W."/>
        </authorList>
    </citation>
    <scope>NUCLEOTIDE SEQUENCE [LARGE SCALE GENOMIC DNA]</scope>
    <source>
        <strain>S19</strain>
    </source>
</reference>
<name>GCH1_BRUA1</name>
<feature type="chain" id="PRO_1000100164" description="GTP cyclohydrolase 1">
    <location>
        <begin position="1"/>
        <end position="213"/>
    </location>
</feature>
<feature type="binding site" evidence="1">
    <location>
        <position position="104"/>
    </location>
    <ligand>
        <name>Zn(2+)</name>
        <dbReference type="ChEBI" id="CHEBI:29105"/>
    </ligand>
</feature>
<feature type="binding site" evidence="1">
    <location>
        <position position="107"/>
    </location>
    <ligand>
        <name>Zn(2+)</name>
        <dbReference type="ChEBI" id="CHEBI:29105"/>
    </ligand>
</feature>
<feature type="binding site" evidence="1">
    <location>
        <position position="175"/>
    </location>
    <ligand>
        <name>Zn(2+)</name>
        <dbReference type="ChEBI" id="CHEBI:29105"/>
    </ligand>
</feature>
<gene>
    <name evidence="1" type="primary">folE</name>
    <name type="ordered locus">BAbS19_I10180</name>
</gene>
<keyword id="KW-0342">GTP-binding</keyword>
<keyword id="KW-0378">Hydrolase</keyword>
<keyword id="KW-0479">Metal-binding</keyword>
<keyword id="KW-0547">Nucleotide-binding</keyword>
<keyword id="KW-0554">One-carbon metabolism</keyword>
<keyword id="KW-0862">Zinc</keyword>
<comment type="catalytic activity">
    <reaction evidence="1">
        <text>GTP + H2O = 7,8-dihydroneopterin 3'-triphosphate + formate + H(+)</text>
        <dbReference type="Rhea" id="RHEA:17473"/>
        <dbReference type="ChEBI" id="CHEBI:15377"/>
        <dbReference type="ChEBI" id="CHEBI:15378"/>
        <dbReference type="ChEBI" id="CHEBI:15740"/>
        <dbReference type="ChEBI" id="CHEBI:37565"/>
        <dbReference type="ChEBI" id="CHEBI:58462"/>
        <dbReference type="EC" id="3.5.4.16"/>
    </reaction>
</comment>
<comment type="pathway">
    <text evidence="1">Cofactor biosynthesis; 7,8-dihydroneopterin triphosphate biosynthesis; 7,8-dihydroneopterin triphosphate from GTP: step 1/1.</text>
</comment>
<comment type="subunit">
    <text evidence="1">Homomer.</text>
</comment>
<comment type="similarity">
    <text evidence="1">Belongs to the GTP cyclohydrolase I family.</text>
</comment>
<dbReference type="EC" id="3.5.4.16" evidence="1"/>
<dbReference type="EMBL" id="CP000887">
    <property type="protein sequence ID" value="ACD72527.1"/>
    <property type="molecule type" value="Genomic_DNA"/>
</dbReference>
<dbReference type="RefSeq" id="WP_002964194.1">
    <property type="nucleotide sequence ID" value="NC_010742.1"/>
</dbReference>
<dbReference type="SMR" id="B2S5T0"/>
<dbReference type="GeneID" id="93016580"/>
<dbReference type="KEGG" id="bmc:BAbS19_I10180"/>
<dbReference type="HOGENOM" id="CLU_049768_3_1_5"/>
<dbReference type="UniPathway" id="UPA00848">
    <property type="reaction ID" value="UER00151"/>
</dbReference>
<dbReference type="Proteomes" id="UP000002565">
    <property type="component" value="Chromosome 1"/>
</dbReference>
<dbReference type="GO" id="GO:0005737">
    <property type="term" value="C:cytoplasm"/>
    <property type="evidence" value="ECO:0007669"/>
    <property type="project" value="TreeGrafter"/>
</dbReference>
<dbReference type="GO" id="GO:0005525">
    <property type="term" value="F:GTP binding"/>
    <property type="evidence" value="ECO:0007669"/>
    <property type="project" value="UniProtKB-KW"/>
</dbReference>
<dbReference type="GO" id="GO:0003934">
    <property type="term" value="F:GTP cyclohydrolase I activity"/>
    <property type="evidence" value="ECO:0007669"/>
    <property type="project" value="UniProtKB-UniRule"/>
</dbReference>
<dbReference type="GO" id="GO:0008270">
    <property type="term" value="F:zinc ion binding"/>
    <property type="evidence" value="ECO:0007669"/>
    <property type="project" value="UniProtKB-UniRule"/>
</dbReference>
<dbReference type="GO" id="GO:0006730">
    <property type="term" value="P:one-carbon metabolic process"/>
    <property type="evidence" value="ECO:0007669"/>
    <property type="project" value="UniProtKB-UniRule"/>
</dbReference>
<dbReference type="GO" id="GO:0006729">
    <property type="term" value="P:tetrahydrobiopterin biosynthetic process"/>
    <property type="evidence" value="ECO:0007669"/>
    <property type="project" value="TreeGrafter"/>
</dbReference>
<dbReference type="GO" id="GO:0046654">
    <property type="term" value="P:tetrahydrofolate biosynthetic process"/>
    <property type="evidence" value="ECO:0007669"/>
    <property type="project" value="UniProtKB-UniRule"/>
</dbReference>
<dbReference type="FunFam" id="1.10.286.10:FF:000001">
    <property type="entry name" value="GTP cyclohydrolase 1"/>
    <property type="match status" value="1"/>
</dbReference>
<dbReference type="FunFam" id="3.30.1130.10:FF:000001">
    <property type="entry name" value="GTP cyclohydrolase 1"/>
    <property type="match status" value="1"/>
</dbReference>
<dbReference type="Gene3D" id="1.10.286.10">
    <property type="match status" value="1"/>
</dbReference>
<dbReference type="Gene3D" id="3.30.1130.10">
    <property type="match status" value="1"/>
</dbReference>
<dbReference type="HAMAP" id="MF_00223">
    <property type="entry name" value="FolE"/>
    <property type="match status" value="1"/>
</dbReference>
<dbReference type="InterPro" id="IPR043133">
    <property type="entry name" value="GTP-CH-I_C/QueF"/>
</dbReference>
<dbReference type="InterPro" id="IPR043134">
    <property type="entry name" value="GTP-CH-I_N"/>
</dbReference>
<dbReference type="InterPro" id="IPR001474">
    <property type="entry name" value="GTP_CycHdrlase_I"/>
</dbReference>
<dbReference type="InterPro" id="IPR018234">
    <property type="entry name" value="GTP_CycHdrlase_I_CS"/>
</dbReference>
<dbReference type="InterPro" id="IPR020602">
    <property type="entry name" value="GTP_CycHdrlase_I_dom"/>
</dbReference>
<dbReference type="NCBIfam" id="TIGR00063">
    <property type="entry name" value="folE"/>
    <property type="match status" value="1"/>
</dbReference>
<dbReference type="NCBIfam" id="NF006825">
    <property type="entry name" value="PRK09347.1-2"/>
    <property type="match status" value="1"/>
</dbReference>
<dbReference type="NCBIfam" id="NF006826">
    <property type="entry name" value="PRK09347.1-3"/>
    <property type="match status" value="1"/>
</dbReference>
<dbReference type="PANTHER" id="PTHR11109:SF7">
    <property type="entry name" value="GTP CYCLOHYDROLASE 1"/>
    <property type="match status" value="1"/>
</dbReference>
<dbReference type="PANTHER" id="PTHR11109">
    <property type="entry name" value="GTP CYCLOHYDROLASE I"/>
    <property type="match status" value="1"/>
</dbReference>
<dbReference type="Pfam" id="PF01227">
    <property type="entry name" value="GTP_cyclohydroI"/>
    <property type="match status" value="1"/>
</dbReference>
<dbReference type="SUPFAM" id="SSF55620">
    <property type="entry name" value="Tetrahydrobiopterin biosynthesis enzymes-like"/>
    <property type="match status" value="1"/>
</dbReference>
<dbReference type="PROSITE" id="PS00859">
    <property type="entry name" value="GTP_CYCLOHYDROL_1_1"/>
    <property type="match status" value="1"/>
</dbReference>
<sequence length="213" mass="23776">MDARILQDNDDTSLPVNQASVTRIHKKPGKAEAEAAVRTLLLWAGEDPDREGLLETPKRVAKAYQELFGGYSESPEEVLGTTFEEVAGYDDMVLVKDISFFSHCEHHMVPIIGKAHVAYLPEGRVVGLSKIARVVDIFARRLQTQESITAQIADSIQRILKPRGVAVMIEAEHMCMAMRSIRKQGSSTITTTFTGDFKEKADQQVRFMTLIRT</sequence>
<evidence type="ECO:0000255" key="1">
    <source>
        <dbReference type="HAMAP-Rule" id="MF_00223"/>
    </source>
</evidence>
<proteinExistence type="inferred from homology"/>
<organism>
    <name type="scientific">Brucella abortus (strain S19)</name>
    <dbReference type="NCBI Taxonomy" id="430066"/>
    <lineage>
        <taxon>Bacteria</taxon>
        <taxon>Pseudomonadati</taxon>
        <taxon>Pseudomonadota</taxon>
        <taxon>Alphaproteobacteria</taxon>
        <taxon>Hyphomicrobiales</taxon>
        <taxon>Brucellaceae</taxon>
        <taxon>Brucella/Ochrobactrum group</taxon>
        <taxon>Brucella</taxon>
    </lineage>
</organism>